<organism>
    <name type="scientific">Clostridium botulinum (strain ATCC 19397 / Type A)</name>
    <dbReference type="NCBI Taxonomy" id="441770"/>
    <lineage>
        <taxon>Bacteria</taxon>
        <taxon>Bacillati</taxon>
        <taxon>Bacillota</taxon>
        <taxon>Clostridia</taxon>
        <taxon>Eubacteriales</taxon>
        <taxon>Clostridiaceae</taxon>
        <taxon>Clostridium</taxon>
    </lineage>
</organism>
<keyword id="KW-0066">ATP synthesis</keyword>
<keyword id="KW-0375">Hydrogen ion transport</keyword>
<keyword id="KW-0406">Ion transport</keyword>
<keyword id="KW-0813">Transport</keyword>
<dbReference type="EMBL" id="CP000726">
    <property type="protein sequence ID" value="ABS34029.1"/>
    <property type="molecule type" value="Genomic_DNA"/>
</dbReference>
<dbReference type="RefSeq" id="WP_011986932.1">
    <property type="nucleotide sequence ID" value="NC_009697.1"/>
</dbReference>
<dbReference type="SMR" id="A7FWQ6"/>
<dbReference type="KEGG" id="cba:CLB_2566"/>
<dbReference type="HOGENOM" id="CLU_022916_0_0_9"/>
<dbReference type="GO" id="GO:0005524">
    <property type="term" value="F:ATP binding"/>
    <property type="evidence" value="ECO:0007669"/>
    <property type="project" value="UniProtKB-UniRule"/>
</dbReference>
<dbReference type="GO" id="GO:0046933">
    <property type="term" value="F:proton-transporting ATP synthase activity, rotational mechanism"/>
    <property type="evidence" value="ECO:0007669"/>
    <property type="project" value="UniProtKB-UniRule"/>
</dbReference>
<dbReference type="GO" id="GO:0042777">
    <property type="term" value="P:proton motive force-driven plasma membrane ATP synthesis"/>
    <property type="evidence" value="ECO:0007669"/>
    <property type="project" value="UniProtKB-UniRule"/>
</dbReference>
<dbReference type="CDD" id="cd18112">
    <property type="entry name" value="ATP-synt_V_A-type_beta_C"/>
    <property type="match status" value="1"/>
</dbReference>
<dbReference type="CDD" id="cd18118">
    <property type="entry name" value="ATP-synt_V_A-type_beta_N"/>
    <property type="match status" value="1"/>
</dbReference>
<dbReference type="CDD" id="cd01135">
    <property type="entry name" value="V_A-ATPase_B"/>
    <property type="match status" value="1"/>
</dbReference>
<dbReference type="Gene3D" id="3.40.50.12240">
    <property type="match status" value="1"/>
</dbReference>
<dbReference type="HAMAP" id="MF_00310">
    <property type="entry name" value="ATP_synth_B_arch"/>
    <property type="match status" value="1"/>
</dbReference>
<dbReference type="InterPro" id="IPR055190">
    <property type="entry name" value="ATP-synt_VA_C"/>
</dbReference>
<dbReference type="InterPro" id="IPR020003">
    <property type="entry name" value="ATPase_a/bsu_AS"/>
</dbReference>
<dbReference type="InterPro" id="IPR004100">
    <property type="entry name" value="ATPase_F1/V1/A1_a/bsu_N"/>
</dbReference>
<dbReference type="InterPro" id="IPR000194">
    <property type="entry name" value="ATPase_F1/V1/A1_a/bsu_nucl-bd"/>
</dbReference>
<dbReference type="InterPro" id="IPR027417">
    <property type="entry name" value="P-loop_NTPase"/>
</dbReference>
<dbReference type="InterPro" id="IPR022879">
    <property type="entry name" value="V-ATPase_su_B/beta"/>
</dbReference>
<dbReference type="NCBIfam" id="NF003235">
    <property type="entry name" value="PRK04196.1"/>
    <property type="match status" value="1"/>
</dbReference>
<dbReference type="PANTHER" id="PTHR43389">
    <property type="entry name" value="V-TYPE PROTON ATPASE SUBUNIT B"/>
    <property type="match status" value="1"/>
</dbReference>
<dbReference type="PANTHER" id="PTHR43389:SF4">
    <property type="entry name" value="V-TYPE PROTON ATPASE SUBUNIT B"/>
    <property type="match status" value="1"/>
</dbReference>
<dbReference type="Pfam" id="PF00006">
    <property type="entry name" value="ATP-synt_ab"/>
    <property type="match status" value="1"/>
</dbReference>
<dbReference type="Pfam" id="PF02874">
    <property type="entry name" value="ATP-synt_ab_N"/>
    <property type="match status" value="1"/>
</dbReference>
<dbReference type="Pfam" id="PF22919">
    <property type="entry name" value="ATP-synt_VA_C"/>
    <property type="match status" value="1"/>
</dbReference>
<dbReference type="PIRSF" id="PIRSF039114">
    <property type="entry name" value="V-ATPsynth_beta/V-ATPase_B"/>
    <property type="match status" value="1"/>
</dbReference>
<dbReference type="SUPFAM" id="SSF47917">
    <property type="entry name" value="C-terminal domain of alpha and beta subunits of F1 ATP synthase"/>
    <property type="match status" value="1"/>
</dbReference>
<dbReference type="SUPFAM" id="SSF52540">
    <property type="entry name" value="P-loop containing nucleoside triphosphate hydrolases"/>
    <property type="match status" value="1"/>
</dbReference>
<dbReference type="PROSITE" id="PS00152">
    <property type="entry name" value="ATPASE_ALPHA_BETA"/>
    <property type="match status" value="1"/>
</dbReference>
<evidence type="ECO:0000255" key="1">
    <source>
        <dbReference type="HAMAP-Rule" id="MF_00310"/>
    </source>
</evidence>
<name>VATB_CLOB1</name>
<protein>
    <recommendedName>
        <fullName evidence="1">V-type ATP synthase beta chain</fullName>
    </recommendedName>
    <alternativeName>
        <fullName evidence="1">V-ATPase subunit B</fullName>
    </alternativeName>
</protein>
<comment type="function">
    <text evidence="1">Produces ATP from ADP in the presence of a proton gradient across the membrane. The V-type beta chain is a regulatory subunit.</text>
</comment>
<comment type="similarity">
    <text evidence="1">Belongs to the ATPase alpha/beta chains family.</text>
</comment>
<sequence length="461" mass="51020">MLKEYRTVKEVVGPLMLVDQVDGVSFDELVEIELHNGEKRRGKVLEINKDKAMVQLFEGSAGINLKGAKVKFLGKPLELGVSEDMLGRVFDGLGNPKDGGPKIIPDKKLDINGIPINPVARNYPDEFIQTGVSAIDGLNTLVRGQKLPVFSGSGLPHAELAAQIARQAKVLNSDSKFAVVFAAIGTTFEEAQYFIDDFTKTGAIDRAVLFINLANDPAIERIATPRMALTAAEYLAFEKGMHVLVIMTDITNYCEALREVSAARKEVPGRRGYPGYLYTDLSTLYERAGRILGKEGSITQIPILTMPEDDKTHPIPDLTGYITEGQIILSRELYKKGIMPPIDVLPSLSRLKDKGIGKGKTREDHADTMNQLFSAYAQGKQAKELSVILGESALSDTDKLYAKFADAFEEEYVSQGFTTNRTIEETLNLGWKLLTILPKSELKRIRDEYLEKYLNKAEESK</sequence>
<proteinExistence type="inferred from homology"/>
<reference key="1">
    <citation type="journal article" date="2007" name="PLoS ONE">
        <title>Analysis of the neurotoxin complex genes in Clostridium botulinum A1-A4 and B1 strains: BoNT/A3, /Ba4 and /B1 clusters are located within plasmids.</title>
        <authorList>
            <person name="Smith T.J."/>
            <person name="Hill K.K."/>
            <person name="Foley B.T."/>
            <person name="Detter J.C."/>
            <person name="Munk A.C."/>
            <person name="Bruce D.C."/>
            <person name="Doggett N.A."/>
            <person name="Smith L.A."/>
            <person name="Marks J.D."/>
            <person name="Xie G."/>
            <person name="Brettin T.S."/>
        </authorList>
    </citation>
    <scope>NUCLEOTIDE SEQUENCE [LARGE SCALE GENOMIC DNA]</scope>
    <source>
        <strain>ATCC 19397 / Type A</strain>
    </source>
</reference>
<feature type="chain" id="PRO_0000322486" description="V-type ATP synthase beta chain">
    <location>
        <begin position="1"/>
        <end position="461"/>
    </location>
</feature>
<gene>
    <name evidence="1" type="primary">atpB</name>
    <name type="ordered locus">CLB_2566</name>
</gene>
<accession>A7FWQ6</accession>